<proteinExistence type="evidence at protein level"/>
<protein>
    <recommendedName>
        <fullName evidence="5">Flagellar radial spoke protein 2</fullName>
    </recommendedName>
</protein>
<dbReference type="EMBL" id="AY373262">
    <property type="protein sequence ID" value="AAQ92371.1"/>
    <property type="molecule type" value="mRNA"/>
</dbReference>
<dbReference type="EMBL" id="DS496115">
    <property type="protein sequence ID" value="EDP06497.1"/>
    <property type="molecule type" value="Genomic_DNA"/>
</dbReference>
<dbReference type="RefSeq" id="XP_001702718.1">
    <property type="nucleotide sequence ID" value="XM_001702666.1"/>
</dbReference>
<dbReference type="PDB" id="7JRJ">
    <property type="method" value="EM"/>
    <property type="resolution" value="3.03 A"/>
    <property type="chains" value="I=1-738"/>
</dbReference>
<dbReference type="PDB" id="7JTK">
    <property type="method" value="EM"/>
    <property type="resolution" value="3.20 A"/>
    <property type="chains" value="C/D=1-738"/>
</dbReference>
<dbReference type="PDB" id="8GLV">
    <property type="method" value="EM"/>
    <property type="resolution" value="3.10 A"/>
    <property type="chains" value="Hi/Hm/JN/JO=1-738"/>
</dbReference>
<dbReference type="PDBsum" id="7JRJ"/>
<dbReference type="PDBsum" id="7JTK"/>
<dbReference type="PDBsum" id="8GLV"/>
<dbReference type="BMRB" id="Q6UBQ3"/>
<dbReference type="EMDB" id="EMD-22446"/>
<dbReference type="EMDB" id="EMD-22475"/>
<dbReference type="EMDB" id="EMD-40220"/>
<dbReference type="SMR" id="Q6UBQ3"/>
<dbReference type="iPTMnet" id="Q6UBQ3"/>
<dbReference type="PaxDb" id="3055-EDP06497"/>
<dbReference type="EnsemblPlants" id="PNW77220">
    <property type="protein sequence ID" value="PNW77220"/>
    <property type="gene ID" value="CHLRE_10g427300v5"/>
</dbReference>
<dbReference type="GeneID" id="5728165"/>
<dbReference type="Gramene" id="PNW77220">
    <property type="protein sequence ID" value="PNW77220"/>
    <property type="gene ID" value="CHLRE_10g427300v5"/>
</dbReference>
<dbReference type="KEGG" id="cre:CHLRE_10g427300v5"/>
<dbReference type="eggNOG" id="ENOG502R8D2">
    <property type="taxonomic scope" value="Eukaryota"/>
</dbReference>
<dbReference type="HOGENOM" id="CLU_376161_0_0_1"/>
<dbReference type="OMA" id="RACSECA"/>
<dbReference type="OrthoDB" id="432281at2759"/>
<dbReference type="GO" id="GO:0005737">
    <property type="term" value="C:cytoplasm"/>
    <property type="evidence" value="ECO:0007669"/>
    <property type="project" value="UniProtKB-KW"/>
</dbReference>
<dbReference type="GO" id="GO:0005856">
    <property type="term" value="C:cytoskeleton"/>
    <property type="evidence" value="ECO:0007669"/>
    <property type="project" value="UniProtKB-KW"/>
</dbReference>
<dbReference type="GO" id="GO:0031514">
    <property type="term" value="C:motile cilium"/>
    <property type="evidence" value="ECO:0007669"/>
    <property type="project" value="UniProtKB-KW"/>
</dbReference>
<dbReference type="GO" id="GO:0048188">
    <property type="term" value="C:Set1C/COMPASS complex"/>
    <property type="evidence" value="ECO:0007669"/>
    <property type="project" value="InterPro"/>
</dbReference>
<dbReference type="GO" id="GO:0005516">
    <property type="term" value="F:calmodulin binding"/>
    <property type="evidence" value="ECO:0007669"/>
    <property type="project" value="UniProtKB-KW"/>
</dbReference>
<dbReference type="CDD" id="cd22982">
    <property type="entry name" value="DD_CrRSP2-like"/>
    <property type="match status" value="1"/>
</dbReference>
<dbReference type="Gene3D" id="1.20.890.10">
    <property type="entry name" value="cAMP-dependent protein kinase regulatory subunit, dimerization-anchoring domain"/>
    <property type="match status" value="1"/>
</dbReference>
<dbReference type="InterPro" id="IPR007858">
    <property type="entry name" value="Dpy-30_motif"/>
</dbReference>
<dbReference type="InterPro" id="IPR037856">
    <property type="entry name" value="Sdc1/DPY30"/>
</dbReference>
<dbReference type="PANTHER" id="PTHR23356:SF16">
    <property type="entry name" value="DPY30 DOMAIN CONTAINING 2"/>
    <property type="match status" value="1"/>
</dbReference>
<dbReference type="PANTHER" id="PTHR23356">
    <property type="entry name" value="DPY30-RELATED"/>
    <property type="match status" value="1"/>
</dbReference>
<dbReference type="Pfam" id="PF05186">
    <property type="entry name" value="Dpy-30"/>
    <property type="match status" value="1"/>
</dbReference>
<reference key="1">
    <citation type="journal article" date="2004" name="Eukaryot. Cell">
        <title>Flagellar radial spoke protein 2 is a calmodulin binding protein required for motility in Chlamydomonas reinhardtii.</title>
        <authorList>
            <person name="Yang P."/>
            <person name="Yang C."/>
            <person name="Sale W.S."/>
        </authorList>
    </citation>
    <scope>NUCLEOTIDE SEQUENCE [MRNA]</scope>
    <scope>PROTEIN SEQUENCE OF 2-23; 50-59; 288-308; 529-538 AND 644-672</scope>
    <scope>FUNCTION</scope>
    <scope>DISRUPTION PHENOTYPE</scope>
</reference>
<reference key="2">
    <citation type="journal article" date="2007" name="Science">
        <title>The Chlamydomonas genome reveals the evolution of key animal and plant functions.</title>
        <authorList>
            <person name="Merchant S.S."/>
            <person name="Prochnik S.E."/>
            <person name="Vallon O."/>
            <person name="Harris E.H."/>
            <person name="Karpowicz S.J."/>
            <person name="Witman G.B."/>
            <person name="Terry A."/>
            <person name="Salamov A."/>
            <person name="Fritz-Laylin L.K."/>
            <person name="Marechal-Drouard L."/>
            <person name="Marshall W.F."/>
            <person name="Qu L.H."/>
            <person name="Nelson D.R."/>
            <person name="Sanderfoot A.A."/>
            <person name="Spalding M.H."/>
            <person name="Kapitonov V.V."/>
            <person name="Ren Q."/>
            <person name="Ferris P."/>
            <person name="Lindquist E."/>
            <person name="Shapiro H."/>
            <person name="Lucas S.M."/>
            <person name="Grimwood J."/>
            <person name="Schmutz J."/>
            <person name="Cardol P."/>
            <person name="Cerutti H."/>
            <person name="Chanfreau G."/>
            <person name="Chen C.L."/>
            <person name="Cognat V."/>
            <person name="Croft M.T."/>
            <person name="Dent R."/>
            <person name="Dutcher S."/>
            <person name="Fernandez E."/>
            <person name="Fukuzawa H."/>
            <person name="Gonzalez-Ballester D."/>
            <person name="Gonzalez-Halphen D."/>
            <person name="Hallmann A."/>
            <person name="Hanikenne M."/>
            <person name="Hippler M."/>
            <person name="Inwood W."/>
            <person name="Jabbari K."/>
            <person name="Kalanon M."/>
            <person name="Kuras R."/>
            <person name="Lefebvre P.A."/>
            <person name="Lemaire S.D."/>
            <person name="Lobanov A.V."/>
            <person name="Lohr M."/>
            <person name="Manuell A."/>
            <person name="Meier I."/>
            <person name="Mets L."/>
            <person name="Mittag M."/>
            <person name="Mittelmeier T."/>
            <person name="Moroney J.V."/>
            <person name="Moseley J."/>
            <person name="Napoli C."/>
            <person name="Nedelcu A.M."/>
            <person name="Niyogi K."/>
            <person name="Novoselov S.V."/>
            <person name="Paulsen I.T."/>
            <person name="Pazour G.J."/>
            <person name="Purton S."/>
            <person name="Ral J.P."/>
            <person name="Riano-Pachon D.M."/>
            <person name="Riekhof W."/>
            <person name="Rymarquis L."/>
            <person name="Schroda M."/>
            <person name="Stern D."/>
            <person name="Umen J."/>
            <person name="Willows R."/>
            <person name="Wilson N."/>
            <person name="Zimmer S.L."/>
            <person name="Allmer J."/>
            <person name="Balk J."/>
            <person name="Bisova K."/>
            <person name="Chen C.J."/>
            <person name="Elias M."/>
            <person name="Gendler K."/>
            <person name="Hauser C."/>
            <person name="Lamb M.R."/>
            <person name="Ledford H."/>
            <person name="Long J.C."/>
            <person name="Minagawa J."/>
            <person name="Page M.D."/>
            <person name="Pan J."/>
            <person name="Pootakham W."/>
            <person name="Roje S."/>
            <person name="Rose A."/>
            <person name="Stahlberg E."/>
            <person name="Terauchi A.M."/>
            <person name="Yang P."/>
            <person name="Ball S."/>
            <person name="Bowler C."/>
            <person name="Dieckmann C.L."/>
            <person name="Gladyshev V.N."/>
            <person name="Green P."/>
            <person name="Jorgensen R."/>
            <person name="Mayfield S."/>
            <person name="Mueller-Roeber B."/>
            <person name="Rajamani S."/>
            <person name="Sayre R.T."/>
            <person name="Brokstein P."/>
            <person name="Dubchak I."/>
            <person name="Goodstein D."/>
            <person name="Hornick L."/>
            <person name="Huang Y.W."/>
            <person name="Jhaveri J."/>
            <person name="Luo Y."/>
            <person name="Martinez D."/>
            <person name="Ngau W.C."/>
            <person name="Otillar B."/>
            <person name="Poliakov A."/>
            <person name="Porter A."/>
            <person name="Szajkowski L."/>
            <person name="Werner G."/>
            <person name="Zhou K."/>
            <person name="Grigoriev I.V."/>
            <person name="Rokhsar D.S."/>
            <person name="Grossman A.R."/>
        </authorList>
    </citation>
    <scope>NUCLEOTIDE SEQUENCE [LARGE SCALE GENOMIC DNA]</scope>
    <source>
        <strain>CC-503</strain>
        <strain>cw92</strain>
    </source>
</reference>
<reference key="3">
    <citation type="journal article" date="2006" name="J. Cell Sci.">
        <title>Radial spoke proteins of Chlamydomonas flagella.</title>
        <authorList>
            <person name="Yang P."/>
            <person name="Diener D.R."/>
            <person name="Yang C."/>
            <person name="Kohno T."/>
            <person name="Pazour G.J."/>
            <person name="Dienes J.M."/>
            <person name="Agrin N.S."/>
            <person name="King S.M."/>
            <person name="Sale W.S."/>
            <person name="Kamiya R."/>
            <person name="Rosenbaum J.L."/>
            <person name="Witman G.B."/>
        </authorList>
    </citation>
    <scope>IDENTIFICATION BY MASS SPECTROMETRY</scope>
</reference>
<reference key="4">
    <citation type="journal article" date="2013" name="Biochemistry">
        <title>Methylation of structural components of the axoneme occurs during flagellar disassembly.</title>
        <authorList>
            <person name="Werner-Peterson R."/>
            <person name="Sloboda R.D."/>
        </authorList>
    </citation>
    <scope>METHYLATION AT ARG-104; ARG-260; ARG-453; ARG-538 AND ARG-615</scope>
</reference>
<gene>
    <name evidence="5" type="primary">RSP2</name>
    <name evidence="10" type="ORF">CHLREDRAFT_186281</name>
</gene>
<name>RSP2_CHLRE</name>
<keyword id="KW-0002">3D-structure</keyword>
<keyword id="KW-0112">Calmodulin-binding</keyword>
<keyword id="KW-0966">Cell projection</keyword>
<keyword id="KW-0969">Cilium</keyword>
<keyword id="KW-0963">Cytoplasm</keyword>
<keyword id="KW-0206">Cytoskeleton</keyword>
<keyword id="KW-0903">Direct protein sequencing</keyword>
<keyword id="KW-0282">Flagellum</keyword>
<keyword id="KW-0488">Methylation</keyword>
<comment type="function">
    <text evidence="2 8">Flagellar radial spokes contribute to the regulation of dynein arm activity and thus the pattern of flagellar bending. They consist of a thin stalk, which is attached to the a subfiber of the outer doublet microtubule, and a bulbous head, which is attached to the stalk and appears to interact with the projections from the central pair of microtubules (PubMed:16507594). Binds calmodulin in a calcium-dependent manner (PubMed:14871938).</text>
</comment>
<comment type="subcellular location">
    <subcellularLocation>
        <location evidence="3">Cytoplasm</location>
        <location evidence="3">Cytoskeleton</location>
        <location evidence="3">Flagellum axoneme</location>
    </subcellularLocation>
    <text evidence="3">Radial spoke.</text>
</comment>
<comment type="PTM">
    <text evidence="4">Asymmetrically dimethylated at Arg-104, Arg-260, Arg-453, Arg-538 and Arg-615 during flagellum resorption. Probably methylated by PRMT1.</text>
</comment>
<comment type="disruption phenotype">
    <text evidence="2">Absence of radial spokes.</text>
</comment>
<comment type="miscellaneous">
    <text evidence="7">In-gel analysis assays show kinase-like activity in vitro. However, such activity has not been confirmed using recombinant protein.</text>
</comment>
<comment type="similarity">
    <text evidence="6">Belongs to the dpy-30 family.</text>
</comment>
<organism evidence="9">
    <name type="scientific">Chlamydomonas reinhardtii</name>
    <name type="common">Chlamydomonas smithii</name>
    <dbReference type="NCBI Taxonomy" id="3055"/>
    <lineage>
        <taxon>Eukaryota</taxon>
        <taxon>Viridiplantae</taxon>
        <taxon>Chlorophyta</taxon>
        <taxon>core chlorophytes</taxon>
        <taxon>Chlorophyceae</taxon>
        <taxon>CS clade</taxon>
        <taxon>Chlamydomonadales</taxon>
        <taxon>Chlamydomonadaceae</taxon>
        <taxon>Chlamydomonas</taxon>
    </lineage>
</organism>
<evidence type="ECO:0000256" key="1">
    <source>
        <dbReference type="SAM" id="MobiDB-lite"/>
    </source>
</evidence>
<evidence type="ECO:0000269" key="2">
    <source>
    </source>
</evidence>
<evidence type="ECO:0000269" key="3">
    <source>
    </source>
</evidence>
<evidence type="ECO:0000269" key="4">
    <source>
    </source>
</evidence>
<evidence type="ECO:0000303" key="5">
    <source>
    </source>
</evidence>
<evidence type="ECO:0000305" key="6"/>
<evidence type="ECO:0000305" key="7">
    <source>
    </source>
</evidence>
<evidence type="ECO:0000305" key="8">
    <source>
    </source>
</evidence>
<evidence type="ECO:0000312" key="9">
    <source>
        <dbReference type="EMBL" id="AAQ92371.1"/>
    </source>
</evidence>
<evidence type="ECO:0000312" key="10">
    <source>
        <dbReference type="EMBL" id="EDP06497.1"/>
    </source>
</evidence>
<evidence type="ECO:0007829" key="11">
    <source>
        <dbReference type="PDB" id="7JRJ"/>
    </source>
</evidence>
<evidence type="ECO:0007829" key="12">
    <source>
        <dbReference type="PDB" id="7JTK"/>
    </source>
</evidence>
<accession>Q6UBQ3</accession>
<sequence>MAPTQAGHDTAYLKETVGEALARGCAAAISAQPNDPVEYLGLWLLKYVKNAEVEGNFYRERQQDLQKKKDRLVKEAQSEQAAKSVALTRKEAADALALVTAEPRELLEAAVKLVKQHTAAGAAYAAVVAEPEEPDWVAPEDDEAAAVETEDEAAGGAALAEGEEPPPEPEPEPEAAPEDGEGDAPAPKIPRPVDYSKKYFAYVAASAGQEHVLEADLYRPAPPPEDADEDFKPEPLPYSFRVLDEKLPMLYVPNVAAEERVKFFRKFPKIGSYQACGVALPASGEFKALLAADTLFPEGSGQPLSADDRDFVWEVSQSLSRALEAVQARAAEALAATSAAEAVEELKAKVAELREQAAAEAAAAAPPPPAEGEEGEGEAPPAEEEPPAEEEAEEEEEEAEEGAEEGAEEGEEGEEAPPKPKKKKKVFNPIPGLQAAIEKLTAAAEAATEADARAQAAVALEKQALDEVVALASSHSDATLSSLRNMLSVPQGTYHVVKALLHLLGRPAASFSTWKRAHSHFSPRLFEDMAAYDATAERDMAVWGRVRSCYKAAPAAKKLDAEMPNTLFGSVALMYIKQVRRVARKAVLQRELAAKLAKAQQDLADKQAALVEAERVKAEREAEEARLAAEAEAAAAAEAEAAARAAAEAEAAAAAEAAAEAAAEAAAAAAEAAAEAGEGEAVAEREAAPAEAEAAPAEGEAAPPAEGEGEAQPAQEGSNSSSSSSDSSSSEESKAAAE</sequence>
<feature type="initiator methionine" description="Removed" evidence="2">
    <location>
        <position position="1"/>
    </location>
</feature>
<feature type="chain" id="PRO_0000431953" description="Flagellar radial spoke protein 2">
    <location>
        <begin position="2"/>
        <end position="738"/>
    </location>
</feature>
<feature type="region of interest" description="Disordered" evidence="1">
    <location>
        <begin position="134"/>
        <end position="189"/>
    </location>
</feature>
<feature type="region of interest" description="Disordered" evidence="1">
    <location>
        <begin position="357"/>
        <end position="426"/>
    </location>
</feature>
<feature type="region of interest" description="Disordered" evidence="1">
    <location>
        <begin position="674"/>
        <end position="738"/>
    </location>
</feature>
<feature type="compositionally biased region" description="Acidic residues" evidence="1">
    <location>
        <begin position="134"/>
        <end position="153"/>
    </location>
</feature>
<feature type="compositionally biased region" description="Acidic residues" evidence="1">
    <location>
        <begin position="161"/>
        <end position="182"/>
    </location>
</feature>
<feature type="compositionally biased region" description="Acidic residues" evidence="1">
    <location>
        <begin position="371"/>
        <end position="415"/>
    </location>
</feature>
<feature type="compositionally biased region" description="Low complexity" evidence="1">
    <location>
        <begin position="689"/>
        <end position="730"/>
    </location>
</feature>
<feature type="modified residue" description="Asymmetric dimethylarginine" evidence="4">
    <location>
        <position position="104"/>
    </location>
</feature>
<feature type="modified residue" description="Asymmetric dimethylarginine" evidence="4">
    <location>
        <position position="260"/>
    </location>
</feature>
<feature type="modified residue" description="Asymmetric dimethylarginine" evidence="4">
    <location>
        <position position="453"/>
    </location>
</feature>
<feature type="modified residue" description="Asymmetric dimethylarginine" evidence="4">
    <location>
        <position position="538"/>
    </location>
</feature>
<feature type="modified residue" description="Asymmetric dimethylarginine" evidence="4">
    <location>
        <position position="615"/>
    </location>
</feature>
<feature type="helix" evidence="11">
    <location>
        <begin position="19"/>
        <end position="30"/>
    </location>
</feature>
<feature type="helix" evidence="11">
    <location>
        <begin position="36"/>
        <end position="97"/>
    </location>
</feature>
<feature type="helix" evidence="11">
    <location>
        <begin position="103"/>
        <end position="117"/>
    </location>
</feature>
<feature type="strand" evidence="11">
    <location>
        <begin position="121"/>
        <end position="129"/>
    </location>
</feature>
<feature type="helix" evidence="11">
    <location>
        <begin position="195"/>
        <end position="197"/>
    </location>
</feature>
<feature type="strand" evidence="11">
    <location>
        <begin position="199"/>
        <end position="205"/>
    </location>
</feature>
<feature type="helix" evidence="11">
    <location>
        <begin position="211"/>
        <end position="214"/>
    </location>
</feature>
<feature type="helix" evidence="11">
    <location>
        <begin position="238"/>
        <end position="240"/>
    </location>
</feature>
<feature type="helix" evidence="11">
    <location>
        <begin position="241"/>
        <end position="244"/>
    </location>
</feature>
<feature type="strand" evidence="11">
    <location>
        <begin position="250"/>
        <end position="253"/>
    </location>
</feature>
<feature type="helix" evidence="11">
    <location>
        <begin position="255"/>
        <end position="257"/>
    </location>
</feature>
<feature type="strand" evidence="11">
    <location>
        <begin position="263"/>
        <end position="267"/>
    </location>
</feature>
<feature type="strand" evidence="11">
    <location>
        <begin position="273"/>
        <end position="279"/>
    </location>
</feature>
<feature type="turn" evidence="11">
    <location>
        <begin position="281"/>
        <end position="283"/>
    </location>
</feature>
<feature type="strand" evidence="11">
    <location>
        <begin position="286"/>
        <end position="293"/>
    </location>
</feature>
<feature type="turn" evidence="11">
    <location>
        <begin position="296"/>
        <end position="298"/>
    </location>
</feature>
<feature type="helix" evidence="11">
    <location>
        <begin position="306"/>
        <end position="332"/>
    </location>
</feature>
<feature type="helix" evidence="12">
    <location>
        <begin position="342"/>
        <end position="359"/>
    </location>
</feature>
<feature type="helix" evidence="11">
    <location>
        <begin position="462"/>
        <end position="474"/>
    </location>
</feature>
<feature type="helix" evidence="11">
    <location>
        <begin position="476"/>
        <end position="484"/>
    </location>
</feature>
<feature type="helix" evidence="11">
    <location>
        <begin position="491"/>
        <end position="503"/>
    </location>
</feature>
<feature type="strand" evidence="12">
    <location>
        <begin position="508"/>
        <end position="513"/>
    </location>
</feature>
<feature type="helix" evidence="11">
    <location>
        <begin position="514"/>
        <end position="517"/>
    </location>
</feature>
<feature type="turn" evidence="11">
    <location>
        <begin position="518"/>
        <end position="520"/>
    </location>
</feature>
<feature type="helix" evidence="11">
    <location>
        <begin position="524"/>
        <end position="530"/>
    </location>
</feature>
<feature type="strand" evidence="12">
    <location>
        <begin position="534"/>
        <end position="536"/>
    </location>
</feature>
<feature type="helix" evidence="12">
    <location>
        <begin position="540"/>
        <end position="551"/>
    </location>
</feature>
<feature type="helix" evidence="12">
    <location>
        <begin position="556"/>
        <end position="562"/>
    </location>
</feature>
<feature type="strand" evidence="12">
    <location>
        <begin position="564"/>
        <end position="566"/>
    </location>
</feature>
<feature type="helix" evidence="12">
    <location>
        <begin position="568"/>
        <end position="609"/>
    </location>
</feature>